<gene>
    <name evidence="1" type="primary">kup</name>
    <name type="ordered locus">Nwi_1238</name>
</gene>
<reference key="1">
    <citation type="journal article" date="2006" name="Appl. Environ. Microbiol.">
        <title>Genome sequence of the chemolithoautotrophic nitrite-oxidizing bacterium Nitrobacter winogradskyi Nb-255.</title>
        <authorList>
            <person name="Starkenburg S.R."/>
            <person name="Chain P.S.G."/>
            <person name="Sayavedra-Soto L.A."/>
            <person name="Hauser L."/>
            <person name="Land M.L."/>
            <person name="Larimer F.W."/>
            <person name="Malfatti S.A."/>
            <person name="Klotz M.G."/>
            <person name="Bottomley P.J."/>
            <person name="Arp D.J."/>
            <person name="Hickey W.J."/>
        </authorList>
    </citation>
    <scope>NUCLEOTIDE SEQUENCE [LARGE SCALE GENOMIC DNA]</scope>
    <source>
        <strain>ATCC 25391 / DSM 10237 / CIP 104748 / NCIMB 11846 / Nb-255</strain>
    </source>
</reference>
<evidence type="ECO:0000255" key="1">
    <source>
        <dbReference type="HAMAP-Rule" id="MF_01522"/>
    </source>
</evidence>
<evidence type="ECO:0000256" key="2">
    <source>
        <dbReference type="SAM" id="MobiDB-lite"/>
    </source>
</evidence>
<comment type="function">
    <text evidence="1">Transport of potassium into the cell. Likely operates as a K(+):H(+) symporter.</text>
</comment>
<comment type="catalytic activity">
    <reaction evidence="1">
        <text>K(+)(in) + H(+)(in) = K(+)(out) + H(+)(out)</text>
        <dbReference type="Rhea" id="RHEA:28490"/>
        <dbReference type="ChEBI" id="CHEBI:15378"/>
        <dbReference type="ChEBI" id="CHEBI:29103"/>
    </reaction>
    <physiologicalReaction direction="right-to-left" evidence="1">
        <dbReference type="Rhea" id="RHEA:28492"/>
    </physiologicalReaction>
</comment>
<comment type="subcellular location">
    <subcellularLocation>
        <location evidence="1">Cell inner membrane</location>
        <topology evidence="1">Multi-pass membrane protein</topology>
    </subcellularLocation>
</comment>
<comment type="similarity">
    <text evidence="1">Belongs to the HAK/KUP transporter (TC 2.A.72) family.</text>
</comment>
<sequence>MRDSPGSKSSSERWHDTMAVSDPTAEGKDESSAKTSGFWALTLGSVGVVFGDIGTSPLYAFREAVDHAAQEGAVTPAIVLGVLSLILWSLFIVVTAKYVLLLLRADNNGEGGTLSLMALGQRALGRRSLLLLALGVVGASMFIGDSMITPAISVLSAVEGLKLAAPRLQDYVVPLTLVILVMLFAVQSRGTARVASAFAPVMALWFLTIAVLGVLHIHEDPHVLLAVNPWYAIHFLLNHGLLGLVIMGLVFLSVTGGEALYADLGHFGRKPIQVAWFCLVLPSLLLNYFGQGALILAHPEAIENTFYRLAPAPLILPLVILATAATVIASQAVITGAYSLIRQGVQLGLLPRFEVRYTSETHAGQIYLPRVNLLLLIGVLLLVLLFRTSSGLASAYGIAVSTTMVADGIMGFVVVWKLWNWHPAAAAALVVPLVVVDMMFFSANLLKLFDGAWVPLLFGIAMVVLIWTWRRGVAILIKKTRRTEVPLLDLIQSLEKRPPHIVKGTAVFLTSDPNFVPTALLHNLKHNKVLHEHNVILTIETAQTPRVGPAERVRMENISEKFSTVSLRFGFMESPNVPKALAIARKLGWQFDIMSTSFFVSRRSLKASAQSGMPAWQDKLFIALSRSANDAIDYFQIPTGRVVEVGTQVII</sequence>
<protein>
    <recommendedName>
        <fullName evidence="1">Probable potassium transport system protein Kup</fullName>
    </recommendedName>
</protein>
<proteinExistence type="inferred from homology"/>
<dbReference type="EMBL" id="CP000115">
    <property type="protein sequence ID" value="ABA04500.1"/>
    <property type="molecule type" value="Genomic_DNA"/>
</dbReference>
<dbReference type="STRING" id="323098.Nwi_1238"/>
<dbReference type="KEGG" id="nwi:Nwi_1238"/>
<dbReference type="eggNOG" id="COG3158">
    <property type="taxonomic scope" value="Bacteria"/>
</dbReference>
<dbReference type="HOGENOM" id="CLU_008142_4_2_5"/>
<dbReference type="Proteomes" id="UP000002531">
    <property type="component" value="Chromosome"/>
</dbReference>
<dbReference type="GO" id="GO:0005886">
    <property type="term" value="C:plasma membrane"/>
    <property type="evidence" value="ECO:0007669"/>
    <property type="project" value="UniProtKB-SubCell"/>
</dbReference>
<dbReference type="GO" id="GO:0015079">
    <property type="term" value="F:potassium ion transmembrane transporter activity"/>
    <property type="evidence" value="ECO:0007669"/>
    <property type="project" value="UniProtKB-UniRule"/>
</dbReference>
<dbReference type="GO" id="GO:0015293">
    <property type="term" value="F:symporter activity"/>
    <property type="evidence" value="ECO:0007669"/>
    <property type="project" value="UniProtKB-UniRule"/>
</dbReference>
<dbReference type="HAMAP" id="MF_01522">
    <property type="entry name" value="Kup"/>
    <property type="match status" value="1"/>
</dbReference>
<dbReference type="InterPro" id="IPR003855">
    <property type="entry name" value="K+_transporter"/>
</dbReference>
<dbReference type="InterPro" id="IPR053952">
    <property type="entry name" value="K_trans_C"/>
</dbReference>
<dbReference type="InterPro" id="IPR053951">
    <property type="entry name" value="K_trans_N"/>
</dbReference>
<dbReference type="InterPro" id="IPR023051">
    <property type="entry name" value="Kup"/>
</dbReference>
<dbReference type="PANTHER" id="PTHR30540:SF79">
    <property type="entry name" value="LOW AFFINITY POTASSIUM TRANSPORT SYSTEM PROTEIN KUP"/>
    <property type="match status" value="1"/>
</dbReference>
<dbReference type="PANTHER" id="PTHR30540">
    <property type="entry name" value="OSMOTIC STRESS POTASSIUM TRANSPORTER"/>
    <property type="match status" value="1"/>
</dbReference>
<dbReference type="Pfam" id="PF02705">
    <property type="entry name" value="K_trans"/>
    <property type="match status" value="1"/>
</dbReference>
<dbReference type="Pfam" id="PF22776">
    <property type="entry name" value="K_trans_C"/>
    <property type="match status" value="1"/>
</dbReference>
<accession>Q3ST91</accession>
<feature type="chain" id="PRO_0000279803" description="Probable potassium transport system protein Kup">
    <location>
        <begin position="1"/>
        <end position="651"/>
    </location>
</feature>
<feature type="transmembrane region" description="Helical" evidence="1">
    <location>
        <begin position="38"/>
        <end position="58"/>
    </location>
</feature>
<feature type="transmembrane region" description="Helical" evidence="1">
    <location>
        <begin position="74"/>
        <end position="94"/>
    </location>
</feature>
<feature type="transmembrane region" description="Helical" evidence="1">
    <location>
        <begin position="129"/>
        <end position="149"/>
    </location>
</feature>
<feature type="transmembrane region" description="Helical" evidence="1">
    <location>
        <begin position="168"/>
        <end position="188"/>
    </location>
</feature>
<feature type="transmembrane region" description="Helical" evidence="1">
    <location>
        <begin position="197"/>
        <end position="217"/>
    </location>
</feature>
<feature type="transmembrane region" description="Helical" evidence="1">
    <location>
        <begin position="232"/>
        <end position="252"/>
    </location>
</feature>
<feature type="transmembrane region" description="Helical" evidence="1">
    <location>
        <begin position="276"/>
        <end position="296"/>
    </location>
</feature>
<feature type="transmembrane region" description="Helical" evidence="1">
    <location>
        <begin position="309"/>
        <end position="329"/>
    </location>
</feature>
<feature type="transmembrane region" description="Helical" evidence="1">
    <location>
        <begin position="366"/>
        <end position="386"/>
    </location>
</feature>
<feature type="transmembrane region" description="Helical" evidence="1">
    <location>
        <begin position="396"/>
        <end position="416"/>
    </location>
</feature>
<feature type="transmembrane region" description="Helical" evidence="1">
    <location>
        <begin position="423"/>
        <end position="443"/>
    </location>
</feature>
<feature type="transmembrane region" description="Helical" evidence="1">
    <location>
        <begin position="448"/>
        <end position="468"/>
    </location>
</feature>
<feature type="region of interest" description="Disordered" evidence="2">
    <location>
        <begin position="1"/>
        <end position="31"/>
    </location>
</feature>
<feature type="compositionally biased region" description="Basic and acidic residues" evidence="2">
    <location>
        <begin position="1"/>
        <end position="16"/>
    </location>
</feature>
<name>KUP_NITWN</name>
<keyword id="KW-0997">Cell inner membrane</keyword>
<keyword id="KW-1003">Cell membrane</keyword>
<keyword id="KW-0406">Ion transport</keyword>
<keyword id="KW-0472">Membrane</keyword>
<keyword id="KW-0630">Potassium</keyword>
<keyword id="KW-0633">Potassium transport</keyword>
<keyword id="KW-1185">Reference proteome</keyword>
<keyword id="KW-0769">Symport</keyword>
<keyword id="KW-0812">Transmembrane</keyword>
<keyword id="KW-1133">Transmembrane helix</keyword>
<keyword id="KW-0813">Transport</keyword>
<organism>
    <name type="scientific">Nitrobacter winogradskyi (strain ATCC 25391 / DSM 10237 / CIP 104748 / NCIMB 11846 / Nb-255)</name>
    <dbReference type="NCBI Taxonomy" id="323098"/>
    <lineage>
        <taxon>Bacteria</taxon>
        <taxon>Pseudomonadati</taxon>
        <taxon>Pseudomonadota</taxon>
        <taxon>Alphaproteobacteria</taxon>
        <taxon>Hyphomicrobiales</taxon>
        <taxon>Nitrobacteraceae</taxon>
        <taxon>Nitrobacter</taxon>
    </lineage>
</organism>